<dbReference type="EMBL" id="AB033100">
    <property type="protein sequence ID" value="BAA86588.2"/>
    <property type="status" value="ALT_INIT"/>
    <property type="molecule type" value="mRNA"/>
</dbReference>
<dbReference type="EMBL" id="AC022532">
    <property type="status" value="NOT_ANNOTATED_CDS"/>
    <property type="molecule type" value="Genomic_DNA"/>
</dbReference>
<dbReference type="EMBL" id="AL355344">
    <property type="status" value="NOT_ANNOTATED_CDS"/>
    <property type="molecule type" value="Genomic_DNA"/>
</dbReference>
<dbReference type="EMBL" id="BC136375">
    <property type="protein sequence ID" value="AAI36376.1"/>
    <property type="molecule type" value="mRNA"/>
</dbReference>
<dbReference type="EMBL" id="BC136376">
    <property type="protein sequence ID" value="AAI36377.1"/>
    <property type="molecule type" value="mRNA"/>
</dbReference>
<dbReference type="CCDS" id="CCDS31215.1"/>
<dbReference type="RefSeq" id="NP_055246.2">
    <property type="nucleotide sequence ID" value="NM_014431.3"/>
</dbReference>
<dbReference type="RefSeq" id="XP_011537939.1">
    <property type="nucleotide sequence ID" value="XM_011539637.3"/>
</dbReference>
<dbReference type="RefSeq" id="XP_011537940.1">
    <property type="nucleotide sequence ID" value="XM_011539638.3"/>
</dbReference>
<dbReference type="RefSeq" id="XP_016871561.1">
    <property type="nucleotide sequence ID" value="XM_017016072.2"/>
</dbReference>
<dbReference type="RefSeq" id="XP_047281011.1">
    <property type="nucleotide sequence ID" value="XM_047425055.1"/>
</dbReference>
<dbReference type="RefSeq" id="XP_047281012.1">
    <property type="nucleotide sequence ID" value="XM_047425056.1"/>
</dbReference>
<dbReference type="RefSeq" id="XP_047281013.1">
    <property type="nucleotide sequence ID" value="XM_047425057.1"/>
</dbReference>
<dbReference type="RefSeq" id="XP_047281014.1">
    <property type="nucleotide sequence ID" value="XM_047425058.1"/>
</dbReference>
<dbReference type="RefSeq" id="XP_054221520.1">
    <property type="nucleotide sequence ID" value="XM_054365545.1"/>
</dbReference>
<dbReference type="RefSeq" id="XP_054221521.1">
    <property type="nucleotide sequence ID" value="XM_054365546.1"/>
</dbReference>
<dbReference type="RefSeq" id="XP_054221522.1">
    <property type="nucleotide sequence ID" value="XM_054365547.1"/>
</dbReference>
<dbReference type="RefSeq" id="XP_054221523.1">
    <property type="nucleotide sequence ID" value="XM_054365548.1"/>
</dbReference>
<dbReference type="RefSeq" id="XP_054221524.1">
    <property type="nucleotide sequence ID" value="XM_054365549.1"/>
</dbReference>
<dbReference type="RefSeq" id="XP_054221525.1">
    <property type="nucleotide sequence ID" value="XM_054365550.1"/>
</dbReference>
<dbReference type="BioGRID" id="118028">
    <property type="interactions" value="106"/>
</dbReference>
<dbReference type="ELM" id="Q9ULE6"/>
<dbReference type="FunCoup" id="Q9ULE6">
    <property type="interactions" value="646"/>
</dbReference>
<dbReference type="IntAct" id="Q9ULE6">
    <property type="interactions" value="37"/>
</dbReference>
<dbReference type="MINT" id="Q9ULE6"/>
<dbReference type="STRING" id="9606.ENSP00000263563"/>
<dbReference type="DEPOD" id="PALD1"/>
<dbReference type="GlyGen" id="Q9ULE6">
    <property type="glycosylation" value="1 site, 1 O-linked glycan (1 site)"/>
</dbReference>
<dbReference type="iPTMnet" id="Q9ULE6"/>
<dbReference type="PhosphoSitePlus" id="Q9ULE6"/>
<dbReference type="BioMuta" id="PALD1"/>
<dbReference type="DMDM" id="146325028"/>
<dbReference type="jPOST" id="Q9ULE6"/>
<dbReference type="MassIVE" id="Q9ULE6"/>
<dbReference type="PaxDb" id="9606-ENSP00000263563"/>
<dbReference type="PeptideAtlas" id="Q9ULE6"/>
<dbReference type="ProteomicsDB" id="85011"/>
<dbReference type="Pumba" id="Q9ULE6"/>
<dbReference type="Antibodypedia" id="2835">
    <property type="antibodies" value="98 antibodies from 20 providers"/>
</dbReference>
<dbReference type="DNASU" id="27143"/>
<dbReference type="Ensembl" id="ENST00000263563.7">
    <property type="protein sequence ID" value="ENSP00000263563.5"/>
    <property type="gene ID" value="ENSG00000107719.10"/>
</dbReference>
<dbReference type="GeneID" id="27143"/>
<dbReference type="KEGG" id="hsa:27143"/>
<dbReference type="MANE-Select" id="ENST00000263563.7">
    <property type="protein sequence ID" value="ENSP00000263563.5"/>
    <property type="RefSeq nucleotide sequence ID" value="NM_014431.3"/>
    <property type="RefSeq protein sequence ID" value="NP_055246.2"/>
</dbReference>
<dbReference type="UCSC" id="uc001jrd.5">
    <property type="organism name" value="human"/>
</dbReference>
<dbReference type="AGR" id="HGNC:23530"/>
<dbReference type="CTD" id="27143"/>
<dbReference type="DisGeNET" id="27143"/>
<dbReference type="GeneCards" id="PALD1"/>
<dbReference type="HGNC" id="HGNC:23530">
    <property type="gene designation" value="PALD1"/>
</dbReference>
<dbReference type="HPA" id="ENSG00000107719">
    <property type="expression patterns" value="Low tissue specificity"/>
</dbReference>
<dbReference type="MIM" id="614656">
    <property type="type" value="gene"/>
</dbReference>
<dbReference type="neXtProt" id="NX_Q9ULE6"/>
<dbReference type="OpenTargets" id="ENSG00000107719"/>
<dbReference type="PharmGKB" id="PA134986569"/>
<dbReference type="VEuPathDB" id="HostDB:ENSG00000107719"/>
<dbReference type="eggNOG" id="ENOG502QQ90">
    <property type="taxonomic scope" value="Eukaryota"/>
</dbReference>
<dbReference type="GeneTree" id="ENSGT00390000005448"/>
<dbReference type="HOGENOM" id="CLU_008167_0_0_1"/>
<dbReference type="InParanoid" id="Q9ULE6"/>
<dbReference type="OMA" id="WLCTHPE"/>
<dbReference type="OrthoDB" id="66369at2759"/>
<dbReference type="PAN-GO" id="Q9ULE6">
    <property type="GO annotations" value="2 GO annotations based on evolutionary models"/>
</dbReference>
<dbReference type="PhylomeDB" id="Q9ULE6"/>
<dbReference type="TreeFam" id="TF332292"/>
<dbReference type="PathwayCommons" id="Q9ULE6"/>
<dbReference type="SignaLink" id="Q9ULE6"/>
<dbReference type="BioGRID-ORCS" id="27143">
    <property type="hits" value="8 hits in 1140 CRISPR screens"/>
</dbReference>
<dbReference type="ChiTaRS" id="PALD1">
    <property type="organism name" value="human"/>
</dbReference>
<dbReference type="GenomeRNAi" id="27143"/>
<dbReference type="Pharos" id="Q9ULE6">
    <property type="development level" value="Tbio"/>
</dbReference>
<dbReference type="PRO" id="PR:Q9ULE6"/>
<dbReference type="Proteomes" id="UP000005640">
    <property type="component" value="Chromosome 10"/>
</dbReference>
<dbReference type="RNAct" id="Q9ULE6">
    <property type="molecule type" value="protein"/>
</dbReference>
<dbReference type="Bgee" id="ENSG00000107719">
    <property type="expression patterns" value="Expressed in tendon of biceps brachii and 127 other cell types or tissues"/>
</dbReference>
<dbReference type="ExpressionAtlas" id="Q9ULE6">
    <property type="expression patterns" value="baseline and differential"/>
</dbReference>
<dbReference type="GO" id="GO:0005737">
    <property type="term" value="C:cytoplasm"/>
    <property type="evidence" value="ECO:0000318"/>
    <property type="project" value="GO_Central"/>
</dbReference>
<dbReference type="GO" id="GO:0005829">
    <property type="term" value="C:cytosol"/>
    <property type="evidence" value="ECO:0000314"/>
    <property type="project" value="MGI"/>
</dbReference>
<dbReference type="GO" id="GO:0043231">
    <property type="term" value="C:intracellular membrane-bounded organelle"/>
    <property type="evidence" value="ECO:0000314"/>
    <property type="project" value="HPA"/>
</dbReference>
<dbReference type="GO" id="GO:0005634">
    <property type="term" value="C:nucleus"/>
    <property type="evidence" value="ECO:0000318"/>
    <property type="project" value="GO_Central"/>
</dbReference>
<dbReference type="GO" id="GO:0004725">
    <property type="term" value="F:protein tyrosine phosphatase activity"/>
    <property type="evidence" value="ECO:0000318"/>
    <property type="project" value="GO_Central"/>
</dbReference>
<dbReference type="CDD" id="cd17659">
    <property type="entry name" value="PTP_paladin_1"/>
    <property type="match status" value="1"/>
</dbReference>
<dbReference type="FunFam" id="3.90.190.10:FF:000091">
    <property type="entry name" value="Phosphatase domain containing paladin 1"/>
    <property type="match status" value="1"/>
</dbReference>
<dbReference type="FunFam" id="3.90.190.10:FF:000067">
    <property type="entry name" value="Phosphatase domain-containing, paladin 1"/>
    <property type="match status" value="1"/>
</dbReference>
<dbReference type="Gene3D" id="3.90.190.10">
    <property type="entry name" value="Protein tyrosine phosphatase superfamily"/>
    <property type="match status" value="2"/>
</dbReference>
<dbReference type="InterPro" id="IPR029021">
    <property type="entry name" value="Prot-tyrosine_phosphatase-like"/>
</dbReference>
<dbReference type="InterPro" id="IPR050561">
    <property type="entry name" value="PTP"/>
</dbReference>
<dbReference type="InterPro" id="IPR003595">
    <property type="entry name" value="Tyr_Pase_cat"/>
</dbReference>
<dbReference type="PANTHER" id="PTHR23339">
    <property type="entry name" value="TYROSINE SPECIFIC PROTEIN PHOSPHATASE AND DUAL SPECIFICITY PROTEIN PHOSPHATASE"/>
    <property type="match status" value="1"/>
</dbReference>
<dbReference type="Pfam" id="PF14566">
    <property type="entry name" value="PTPlike_phytase"/>
    <property type="match status" value="2"/>
</dbReference>
<dbReference type="SMART" id="SM00404">
    <property type="entry name" value="PTPc_motif"/>
    <property type="match status" value="1"/>
</dbReference>
<dbReference type="SMART" id="SM01301">
    <property type="entry name" value="PTPlike_phytase"/>
    <property type="match status" value="2"/>
</dbReference>
<dbReference type="SUPFAM" id="SSF52799">
    <property type="entry name" value="(Phosphotyrosine protein) phosphatases II"/>
    <property type="match status" value="2"/>
</dbReference>
<accession>Q9ULE6</accession>
<accession>B2RMS1</accession>
<accession>B9EGC6</accession>
<accession>Q5JTK7</accession>
<accession>Q5JTK8</accession>
<proteinExistence type="evidence at protein level"/>
<organism>
    <name type="scientific">Homo sapiens</name>
    <name type="common">Human</name>
    <dbReference type="NCBI Taxonomy" id="9606"/>
    <lineage>
        <taxon>Eukaryota</taxon>
        <taxon>Metazoa</taxon>
        <taxon>Chordata</taxon>
        <taxon>Craniata</taxon>
        <taxon>Vertebrata</taxon>
        <taxon>Euteleostomi</taxon>
        <taxon>Mammalia</taxon>
        <taxon>Eutheria</taxon>
        <taxon>Euarchontoglires</taxon>
        <taxon>Primates</taxon>
        <taxon>Haplorrhini</taxon>
        <taxon>Catarrhini</taxon>
        <taxon>Hominidae</taxon>
        <taxon>Homo</taxon>
    </lineage>
</organism>
<name>PALD_HUMAN</name>
<protein>
    <recommendedName>
        <fullName>Paladin</fullName>
    </recommendedName>
</protein>
<reference key="1">
    <citation type="journal article" date="1999" name="DNA Res.">
        <title>Prediction of the coding sequences of unidentified human genes. XV. The complete sequences of 100 new cDNA clones from brain which code for large proteins in vitro.</title>
        <authorList>
            <person name="Nagase T."/>
            <person name="Ishikawa K."/>
            <person name="Kikuno R."/>
            <person name="Hirosawa M."/>
            <person name="Nomura N."/>
            <person name="Ohara O."/>
        </authorList>
    </citation>
    <scope>NUCLEOTIDE SEQUENCE [LARGE SCALE MRNA]</scope>
    <scope>VARIANT LEU-141</scope>
    <source>
        <tissue>Brain</tissue>
    </source>
</reference>
<reference key="2">
    <citation type="journal article" date="2002" name="DNA Res.">
        <title>Construction of expression-ready cDNA clones for KIAA genes: manual curation of 330 KIAA cDNA clones.</title>
        <authorList>
            <person name="Nakajima D."/>
            <person name="Okazaki N."/>
            <person name="Yamakawa H."/>
            <person name="Kikuno R."/>
            <person name="Ohara O."/>
            <person name="Nagase T."/>
        </authorList>
    </citation>
    <scope>SEQUENCE REVISION</scope>
</reference>
<reference key="3">
    <citation type="journal article" date="2004" name="Nature">
        <title>The DNA sequence and comparative analysis of human chromosome 10.</title>
        <authorList>
            <person name="Deloukas P."/>
            <person name="Earthrowl M.E."/>
            <person name="Grafham D.V."/>
            <person name="Rubenfield M."/>
            <person name="French L."/>
            <person name="Steward C.A."/>
            <person name="Sims S.K."/>
            <person name="Jones M.C."/>
            <person name="Searle S."/>
            <person name="Scott C."/>
            <person name="Howe K."/>
            <person name="Hunt S.E."/>
            <person name="Andrews T.D."/>
            <person name="Gilbert J.G.R."/>
            <person name="Swarbreck D."/>
            <person name="Ashurst J.L."/>
            <person name="Taylor A."/>
            <person name="Battles J."/>
            <person name="Bird C.P."/>
            <person name="Ainscough R."/>
            <person name="Almeida J.P."/>
            <person name="Ashwell R.I.S."/>
            <person name="Ambrose K.D."/>
            <person name="Babbage A.K."/>
            <person name="Bagguley C.L."/>
            <person name="Bailey J."/>
            <person name="Banerjee R."/>
            <person name="Bates K."/>
            <person name="Beasley H."/>
            <person name="Bray-Allen S."/>
            <person name="Brown A.J."/>
            <person name="Brown J.Y."/>
            <person name="Burford D.C."/>
            <person name="Burrill W."/>
            <person name="Burton J."/>
            <person name="Cahill P."/>
            <person name="Camire D."/>
            <person name="Carter N.P."/>
            <person name="Chapman J.C."/>
            <person name="Clark S.Y."/>
            <person name="Clarke G."/>
            <person name="Clee C.M."/>
            <person name="Clegg S."/>
            <person name="Corby N."/>
            <person name="Coulson A."/>
            <person name="Dhami P."/>
            <person name="Dutta I."/>
            <person name="Dunn M."/>
            <person name="Faulkner L."/>
            <person name="Frankish A."/>
            <person name="Frankland J.A."/>
            <person name="Garner P."/>
            <person name="Garnett J."/>
            <person name="Gribble S."/>
            <person name="Griffiths C."/>
            <person name="Grocock R."/>
            <person name="Gustafson E."/>
            <person name="Hammond S."/>
            <person name="Harley J.L."/>
            <person name="Hart E."/>
            <person name="Heath P.D."/>
            <person name="Ho T.P."/>
            <person name="Hopkins B."/>
            <person name="Horne J."/>
            <person name="Howden P.J."/>
            <person name="Huckle E."/>
            <person name="Hynds C."/>
            <person name="Johnson C."/>
            <person name="Johnson D."/>
            <person name="Kana A."/>
            <person name="Kay M."/>
            <person name="Kimberley A.M."/>
            <person name="Kershaw J.K."/>
            <person name="Kokkinaki M."/>
            <person name="Laird G.K."/>
            <person name="Lawlor S."/>
            <person name="Lee H.M."/>
            <person name="Leongamornlert D.A."/>
            <person name="Laird G."/>
            <person name="Lloyd C."/>
            <person name="Lloyd D.M."/>
            <person name="Loveland J."/>
            <person name="Lovell J."/>
            <person name="McLaren S."/>
            <person name="McLay K.E."/>
            <person name="McMurray A."/>
            <person name="Mashreghi-Mohammadi M."/>
            <person name="Matthews L."/>
            <person name="Milne S."/>
            <person name="Nickerson T."/>
            <person name="Nguyen M."/>
            <person name="Overton-Larty E."/>
            <person name="Palmer S.A."/>
            <person name="Pearce A.V."/>
            <person name="Peck A.I."/>
            <person name="Pelan S."/>
            <person name="Phillimore B."/>
            <person name="Porter K."/>
            <person name="Rice C.M."/>
            <person name="Rogosin A."/>
            <person name="Ross M.T."/>
            <person name="Sarafidou T."/>
            <person name="Sehra H.K."/>
            <person name="Shownkeen R."/>
            <person name="Skuce C.D."/>
            <person name="Smith M."/>
            <person name="Standring L."/>
            <person name="Sycamore N."/>
            <person name="Tester J."/>
            <person name="Thorpe A."/>
            <person name="Torcasso W."/>
            <person name="Tracey A."/>
            <person name="Tromans A."/>
            <person name="Tsolas J."/>
            <person name="Wall M."/>
            <person name="Walsh J."/>
            <person name="Wang H."/>
            <person name="Weinstock K."/>
            <person name="West A.P."/>
            <person name="Willey D.L."/>
            <person name="Whitehead S.L."/>
            <person name="Wilming L."/>
            <person name="Wray P.W."/>
            <person name="Young L."/>
            <person name="Chen Y."/>
            <person name="Lovering R.C."/>
            <person name="Moschonas N.K."/>
            <person name="Siebert R."/>
            <person name="Fechtel K."/>
            <person name="Bentley D."/>
            <person name="Durbin R.M."/>
            <person name="Hubbard T."/>
            <person name="Doucette-Stamm L."/>
            <person name="Beck S."/>
            <person name="Smith D.R."/>
            <person name="Rogers J."/>
        </authorList>
    </citation>
    <scope>NUCLEOTIDE SEQUENCE [LARGE SCALE GENOMIC DNA]</scope>
</reference>
<reference key="4">
    <citation type="journal article" date="2004" name="Genome Res.">
        <title>The status, quality, and expansion of the NIH full-length cDNA project: the Mammalian Gene Collection (MGC).</title>
        <authorList>
            <consortium name="The MGC Project Team"/>
        </authorList>
    </citation>
    <scope>NUCLEOTIDE SEQUENCE [LARGE SCALE MRNA]</scope>
    <scope>VARIANT LEU-141</scope>
    <source>
        <tissue>Testis</tissue>
    </source>
</reference>
<reference key="5">
    <citation type="journal article" date="2010" name="Proteomics">
        <title>Strategy for comprehensive identification of human N-myristoylated proteins using an insect cell-free protein synthesis system.</title>
        <authorList>
            <person name="Suzuki T."/>
            <person name="Moriya K."/>
            <person name="Nagatoshi K."/>
            <person name="Ota Y."/>
            <person name="Ezure T."/>
            <person name="Ando E."/>
            <person name="Tsunasawa S."/>
            <person name="Utsumi T."/>
        </authorList>
    </citation>
    <scope>MYRISTOYLATION AT GLY-2</scope>
</reference>
<reference key="6">
    <citation type="journal article" date="2011" name="BMC Syst. Biol.">
        <title>Initial characterization of the human central proteome.</title>
        <authorList>
            <person name="Burkard T.R."/>
            <person name="Planyavsky M."/>
            <person name="Kaupe I."/>
            <person name="Breitwieser F.P."/>
            <person name="Buerckstuemmer T."/>
            <person name="Bennett K.L."/>
            <person name="Superti-Furga G."/>
            <person name="Colinge J."/>
        </authorList>
    </citation>
    <scope>IDENTIFICATION BY MASS SPECTROMETRY [LARGE SCALE ANALYSIS]</scope>
</reference>
<reference key="7">
    <citation type="journal article" date="2012" name="Dev. Dyn.">
        <title>Paladin (X99384) is expressed in the vasculature and shifts from endothelial to vascular smooth muscle cells during mouse development.</title>
        <authorList>
            <person name="Wallgard E."/>
            <person name="Nitzsche A."/>
            <person name="Larsson J."/>
            <person name="Guo X."/>
            <person name="Dieterich L.C."/>
            <person name="Dimberg A."/>
            <person name="Olofsson T."/>
            <person name="Ponten F.C."/>
            <person name="Makinen T."/>
            <person name="Kalen M."/>
            <person name="Hellstrom M."/>
        </authorList>
    </citation>
    <scope>SUBCELLULAR LOCATION</scope>
    <scope>TISSUE SPECIFICITY</scope>
</reference>
<gene>
    <name type="primary">PALD1</name>
    <name type="synonym">KIAA1274</name>
    <name type="synonym">PALD</name>
</gene>
<sequence length="856" mass="96754">MGTTASTAQQTVSAGTPFEGLQGSGTMDSRHSVSIHSFQSTSLHNSKAKSIIPNKVAPVVITYNCKEEFQIHDELLKAHYTLGRLSDNTPEHYLVQGRYFLVRDVTEKMDVLGTVGSCGAPNFRQVQGGLTVFGMGQPSLSGFRRVLQKLQKDGHRECVIFCVREEPVLFLRADEDFVSYTPRDKQNLHENLQGLGPGVRVESLELAIRKEIHDFAQLSENTYHVYHNTEDLWGEPHAVAIHGEDDLHVTEEVYKRPLFLQPTYRYHRLPLPEQGSPLEAQLDAFVSVLRETPSLLQLRDAHGPPPALVFSCQMGVGRTNLGMVLGTLILLHRSGTTSQPEAAPTQAKPLPMEQFQVIQSFLRMVPQGRRMVEEVDRAITACAELHDLKEVVLENQKKLEGIRPESPAQGSGSRHSVWQRALWSLERYFYLILFNYYLHEQYPLAFALSFSRWLCAHPELYRLPVTLSSAGPVAPRDLIARGSLREDDLVSPDALSTVREMDVANFRRVPRMPIYGTAQPSAKALGSILAYLTDAKRRLRKVVWVSLREEAVLECDGHTYSLRWPGPPVAPDQLETLEAQLKAHLSEPPPGKEGPLTYRFQTCLTMQEVFSQHRRACPGLTYHRIPMPDFCAPREEDFDQLLEALRAALSKDPGTGFVFSCLSGQGRTTTAMVVAVLAFWHIQGFPEVGEEELVSVPDAKFTKGEFQVVMKVVQLLPDGHRVKKEVDAALDTVSETMTPMHYHLREIIICTYRQAKAAKEAQEMRRLQLRSLQYLERYVCLILFNAYLHLEKADSWQRPFSTWMQEVASKAGIYEILNELGFPELESGEDQPFSRLRYRWQEQSCSLEPSAPEDLL</sequence>
<evidence type="ECO:0000250" key="1">
    <source>
        <dbReference type="UniProtKB" id="P70261"/>
    </source>
</evidence>
<evidence type="ECO:0000256" key="2">
    <source>
        <dbReference type="SAM" id="MobiDB-lite"/>
    </source>
</evidence>
<evidence type="ECO:0000269" key="3">
    <source>
    </source>
</evidence>
<evidence type="ECO:0000269" key="4">
    <source>
    </source>
</evidence>
<evidence type="ECO:0000269" key="5">
    <source>
    </source>
</evidence>
<evidence type="ECO:0000269" key="6">
    <source>
    </source>
</evidence>
<evidence type="ECO:0000305" key="7"/>
<feature type="initiator methionine" description="Removed">
    <location>
        <position position="1"/>
    </location>
</feature>
<feature type="chain" id="PRO_0000286130" description="Paladin">
    <location>
        <begin position="2"/>
        <end position="856"/>
    </location>
</feature>
<feature type="region of interest" description="Disordered" evidence="2">
    <location>
        <begin position="1"/>
        <end position="29"/>
    </location>
</feature>
<feature type="compositionally biased region" description="Low complexity" evidence="2">
    <location>
        <begin position="1"/>
        <end position="16"/>
    </location>
</feature>
<feature type="modified residue" description="Phosphoserine" evidence="1">
    <location>
        <position position="86"/>
    </location>
</feature>
<feature type="lipid moiety-binding region" description="N-myristoyl glycine" evidence="5">
    <location>
        <position position="2"/>
    </location>
</feature>
<feature type="sequence variant" id="VAR_032076" description="In dbSNP:rs2275060." evidence="3 4">
    <original>S</original>
    <variation>L</variation>
    <location>
        <position position="141"/>
    </location>
</feature>
<feature type="sequence variant" id="VAR_032077" description="In dbSNP:rs3740447.">
    <original>R</original>
    <variation>C</variation>
    <location>
        <position position="721"/>
    </location>
</feature>
<feature type="sequence variant" id="VAR_062188" description="In dbSNP:rs10999406.">
    <original>G</original>
    <variation>R</variation>
    <location>
        <position position="828"/>
    </location>
</feature>
<comment type="interaction">
    <interactant intactId="EBI-3957166">
        <id>Q9ULE6</id>
    </interactant>
    <interactant intactId="EBI-968267">
        <id>Q92985</id>
        <label>IRF7</label>
    </interactant>
    <organismsDiffer>false</organismsDiffer>
    <experiments>2</experiments>
</comment>
<comment type="interaction">
    <interactant intactId="EBI-3957166">
        <id>Q9ULE6</id>
    </interactant>
    <interactant intactId="EBI-6115394">
        <id>A2APF7</id>
        <label>Zbp1</label>
    </interactant>
    <organismsDiffer>true</organismsDiffer>
    <experiments>2</experiments>
</comment>
<comment type="subcellular location">
    <subcellularLocation>
        <location evidence="6">Cytoplasm</location>
        <location evidence="6">Cytosol</location>
    </subcellularLocation>
</comment>
<comment type="tissue specificity">
    <text evidence="6">Expressed in endothelial cells, and in certain larger vessels, in mural cells. In the brain, possibly expressed in microglia. Expressed in peripheral blood mononuclear cells (at protein level).</text>
</comment>
<comment type="similarity">
    <text evidence="7">Belongs to the paladin family.</text>
</comment>
<comment type="sequence caution" evidence="7">
    <conflict type="erroneous initiation">
        <sequence resource="EMBL-CDS" id="BAA86588"/>
    </conflict>
    <text>Extended N-terminus.</text>
</comment>
<keyword id="KW-0963">Cytoplasm</keyword>
<keyword id="KW-0449">Lipoprotein</keyword>
<keyword id="KW-0519">Myristate</keyword>
<keyword id="KW-0597">Phosphoprotein</keyword>
<keyword id="KW-1267">Proteomics identification</keyword>
<keyword id="KW-1185">Reference proteome</keyword>